<name>RECX_LACDA</name>
<dbReference type="EMBL" id="CR954253">
    <property type="protein sequence ID" value="CAI97392.1"/>
    <property type="molecule type" value="Genomic_DNA"/>
</dbReference>
<dbReference type="RefSeq" id="WP_011543707.1">
    <property type="nucleotide sequence ID" value="NC_008054.1"/>
</dbReference>
<dbReference type="SMR" id="Q1GB82"/>
<dbReference type="STRING" id="390333.Ldb0562"/>
<dbReference type="KEGG" id="ldb:Ldb0562"/>
<dbReference type="PATRIC" id="fig|390333.13.peg.236"/>
<dbReference type="eggNOG" id="COG2137">
    <property type="taxonomic scope" value="Bacteria"/>
</dbReference>
<dbReference type="HOGENOM" id="CLU_066607_4_0_9"/>
<dbReference type="BioCyc" id="LDEL390333:LDB_RS02420-MONOMER"/>
<dbReference type="Proteomes" id="UP000001259">
    <property type="component" value="Chromosome"/>
</dbReference>
<dbReference type="GO" id="GO:0005737">
    <property type="term" value="C:cytoplasm"/>
    <property type="evidence" value="ECO:0007669"/>
    <property type="project" value="UniProtKB-SubCell"/>
</dbReference>
<dbReference type="GO" id="GO:0006282">
    <property type="term" value="P:regulation of DNA repair"/>
    <property type="evidence" value="ECO:0007669"/>
    <property type="project" value="UniProtKB-UniRule"/>
</dbReference>
<dbReference type="Gene3D" id="1.10.10.10">
    <property type="entry name" value="Winged helix-like DNA-binding domain superfamily/Winged helix DNA-binding domain"/>
    <property type="match status" value="4"/>
</dbReference>
<dbReference type="HAMAP" id="MF_01114">
    <property type="entry name" value="RecX"/>
    <property type="match status" value="1"/>
</dbReference>
<dbReference type="InterPro" id="IPR053926">
    <property type="entry name" value="RecX_HTH_1st"/>
</dbReference>
<dbReference type="InterPro" id="IPR053924">
    <property type="entry name" value="RecX_HTH_2nd"/>
</dbReference>
<dbReference type="InterPro" id="IPR053925">
    <property type="entry name" value="RecX_HTH_3rd"/>
</dbReference>
<dbReference type="InterPro" id="IPR003783">
    <property type="entry name" value="Regulatory_RecX"/>
</dbReference>
<dbReference type="InterPro" id="IPR036388">
    <property type="entry name" value="WH-like_DNA-bd_sf"/>
</dbReference>
<dbReference type="NCBIfam" id="NF010733">
    <property type="entry name" value="PRK14135.1"/>
    <property type="match status" value="1"/>
</dbReference>
<dbReference type="PANTHER" id="PTHR33602">
    <property type="entry name" value="REGULATORY PROTEIN RECX FAMILY PROTEIN"/>
    <property type="match status" value="1"/>
</dbReference>
<dbReference type="PANTHER" id="PTHR33602:SF1">
    <property type="entry name" value="REGULATORY PROTEIN RECX FAMILY PROTEIN"/>
    <property type="match status" value="1"/>
</dbReference>
<dbReference type="Pfam" id="PF21982">
    <property type="entry name" value="RecX_HTH1"/>
    <property type="match status" value="1"/>
</dbReference>
<dbReference type="Pfam" id="PF02631">
    <property type="entry name" value="RecX_HTH2"/>
    <property type="match status" value="1"/>
</dbReference>
<dbReference type="Pfam" id="PF21981">
    <property type="entry name" value="RecX_HTH3"/>
    <property type="match status" value="1"/>
</dbReference>
<accession>Q1GB82</accession>
<protein>
    <recommendedName>
        <fullName evidence="1">Regulatory protein RecX</fullName>
    </recommendedName>
</protein>
<organism>
    <name type="scientific">Lactobacillus delbrueckii subsp. bulgaricus (strain ATCC 11842 / DSM 20081 / BCRC 10696 / JCM 1002 / NBRC 13953 / NCIMB 11778 / NCTC 12712 / WDCM 00102 / Lb 14)</name>
    <dbReference type="NCBI Taxonomy" id="390333"/>
    <lineage>
        <taxon>Bacteria</taxon>
        <taxon>Bacillati</taxon>
        <taxon>Bacillota</taxon>
        <taxon>Bacilli</taxon>
        <taxon>Lactobacillales</taxon>
        <taxon>Lactobacillaceae</taxon>
        <taxon>Lactobacillus</taxon>
    </lineage>
</organism>
<comment type="function">
    <text evidence="1">Modulates RecA activity.</text>
</comment>
<comment type="subcellular location">
    <subcellularLocation>
        <location evidence="1">Cytoplasm</location>
    </subcellularLocation>
</comment>
<comment type="similarity">
    <text evidence="1">Belongs to the RecX family.</text>
</comment>
<reference key="1">
    <citation type="journal article" date="2006" name="Proc. Natl. Acad. Sci. U.S.A.">
        <title>The complete genome sequence of Lactobacillus bulgaricus reveals extensive and ongoing reductive evolution.</title>
        <authorList>
            <person name="van de Guchte M."/>
            <person name="Penaud S."/>
            <person name="Grimaldi C."/>
            <person name="Barbe V."/>
            <person name="Bryson K."/>
            <person name="Nicolas P."/>
            <person name="Robert C."/>
            <person name="Oztas S."/>
            <person name="Mangenot S."/>
            <person name="Couloux A."/>
            <person name="Loux V."/>
            <person name="Dervyn R."/>
            <person name="Bossy R."/>
            <person name="Bolotin A."/>
            <person name="Batto J.-M."/>
            <person name="Walunas T."/>
            <person name="Gibrat J.-F."/>
            <person name="Bessieres P."/>
            <person name="Weissenbach J."/>
            <person name="Ehrlich S.D."/>
            <person name="Maguin E."/>
        </authorList>
    </citation>
    <scope>NUCLEOTIDE SEQUENCE [LARGE SCALE GENOMIC DNA]</scope>
    <source>
        <strain>ATCC 11842 / DSM 20081 / BCRC 10696 / JCM 1002 / NBRC 13953 / NCIMB 11778 / NCTC 12712 / WDCM 00102 / Lb 14</strain>
    </source>
</reference>
<feature type="chain" id="PRO_1000065179" description="Regulatory protein RecX">
    <location>
        <begin position="1"/>
        <end position="271"/>
    </location>
</feature>
<keyword id="KW-0963">Cytoplasm</keyword>
<keyword id="KW-1185">Reference proteome</keyword>
<sequence>MAIITKVSAQKRQGRYNIFLDQEYAFSVSEKTLAEFVLLKGQELSPQKINEILDYEASAKASDLAARYLSYQPRTIKEVTDYLSQHEISRSAAKRAVNELTHLGYLDDAAYARLFVKNNLQVGKNGPGAVRRDLKKKGVDDDLIEAALADVTDEEWAGVGKRLVKSLLGQQGKIAKREVDRKMQTKLLSHGFSGSLAQAVTQDLVPEADEDQERAALVKQVLKAYKRFKRYEPGVREQKMRQYLYSHGFSGDEISAFLVGEIIPLEELEEY</sequence>
<proteinExistence type="inferred from homology"/>
<evidence type="ECO:0000255" key="1">
    <source>
        <dbReference type="HAMAP-Rule" id="MF_01114"/>
    </source>
</evidence>
<gene>
    <name evidence="1" type="primary">recX</name>
    <name type="ordered locus">Ldb0562</name>
</gene>